<sequence>MVTQNKKILIITGSFGNGHMQVTQSIVNQLNDMNLDHLSVIEHDLFMEAHPILTSICKKWYINSFKYFRNMYKGFYYSRPDKLDKCFYKYYGLNKLINLLIKEKPDLILLTFPTPVMSVLTEQFNINIPVATVMTDYRLHKNWITPYSTRYYVATKETKQDFIDVGIDPSTVKVTGIPIDNKFETPINQKQWLIDNNLDPDKQTILMSAGAFGVSKGFDTMITDILAKSANAQVVMICGKSKELKRSLTAKFKSNENVLILGYTKHMNEWMASSQLMITKPGGITITEGFARCIPMIFLNPAPGQELENALYFEEKGFGKIADTPEEAIKIVASLTNGNEQLTNMISTMEQDKIKYATQTICRDLLDLIGHSSQPQEIYGKVPLYARFFVK</sequence>
<comment type="function">
    <text evidence="1">Processive glucosyltransferase involved in the biosynthesis of both the bilayer- and non-bilayer-forming membrane glucolipids. Is able to successively transfer two glucosyl residues to diacylglycerol (DAG), thereby catalyzing the formation of beta-monoglucosyl-DAG (3-O-(beta-D-glucopyranosyl)-1,2-diacyl-sn-glycerol) and beta-diglucosyl-DAG (3-O-(beta-D-glucopyranosyl-beta-(1-&gt;6)-D-glucopyranosyl)-1,2-diacyl-sn-glycerol). Beta-diglucosyl-DAG is the predominant glycolipid found in Bacillales and is also used as a membrane anchor for lipoteichoic acid (LTA).</text>
</comment>
<comment type="catalytic activity">
    <reaction>
        <text>a 1,2-diacyl-3-O-(beta-D-glucopyranosyl)-sn-glycerol + UDP-alpha-D-glucose = a 1,2-diacyl-3-O-(beta-D-Glc-(1-&gt;6)-beta-D-Glc)-sn-glycerol + UDP + H(+)</text>
        <dbReference type="Rhea" id="RHEA:39031"/>
        <dbReference type="ChEBI" id="CHEBI:15378"/>
        <dbReference type="ChEBI" id="CHEBI:58223"/>
        <dbReference type="ChEBI" id="CHEBI:58885"/>
        <dbReference type="ChEBI" id="CHEBI:75799"/>
        <dbReference type="ChEBI" id="CHEBI:76264"/>
        <dbReference type="EC" id="2.4.1.315"/>
    </reaction>
</comment>
<comment type="catalytic activity">
    <reaction evidence="1">
        <text>a 1,2-diacyl-sn-glycerol + UDP-alpha-D-glucose = a 1,2-diacyl-3-O-(beta-D-glucopyranosyl)-sn-glycerol + UDP + H(+)</text>
        <dbReference type="Rhea" id="RHEA:17285"/>
        <dbReference type="ChEBI" id="CHEBI:15378"/>
        <dbReference type="ChEBI" id="CHEBI:17815"/>
        <dbReference type="ChEBI" id="CHEBI:58223"/>
        <dbReference type="ChEBI" id="CHEBI:58885"/>
        <dbReference type="ChEBI" id="CHEBI:75799"/>
    </reaction>
</comment>
<comment type="pathway">
    <text evidence="1">Glycolipid metabolism; diglucosyl-diacylglycerol biosynthesis.</text>
</comment>
<comment type="subcellular location">
    <subcellularLocation>
        <location evidence="1">Cell membrane</location>
    </subcellularLocation>
</comment>
<comment type="similarity">
    <text evidence="1">Belongs to the glycosyltransferase 28 family. UgtP subfamily.</text>
</comment>
<protein>
    <recommendedName>
        <fullName evidence="1">Processive diacylglycerol beta-glucosyltransferase</fullName>
        <ecNumber>2.4.1.315</ecNumber>
    </recommendedName>
    <alternativeName>
        <fullName evidence="1">Beta-diglucosyldiacylglycerol synthase</fullName>
        <shortName evidence="1">Beta-DGS</shortName>
        <shortName evidence="1">DGlcDAG synthase</shortName>
        <shortName evidence="1">Glc2-DAG synthase</shortName>
    </alternativeName>
    <alternativeName>
        <fullName evidence="1">Beta-gentiobiosyldiacylglycerol synthase</fullName>
    </alternativeName>
    <alternativeName>
        <fullName evidence="1">Beta-monoglucosyldiacylglycerol synthase</fullName>
        <shortName evidence="1">Beta-MGS</shortName>
        <shortName evidence="1">MGlcDAG synthase</shortName>
    </alternativeName>
    <alternativeName>
        <fullName>Diglucosyl diacylglycerol synthase (1,6-linking)</fullName>
    </alternativeName>
    <alternativeName>
        <fullName evidence="1">Glucosyl-beta-1,6-glucosyldiacylglycerol synthase</fullName>
    </alternativeName>
    <alternativeName>
        <fullName evidence="1">UDP glucosyltransferase</fullName>
    </alternativeName>
    <alternativeName>
        <fullName evidence="1">UDP-glucose:1,2-diacylglycerol-3-beta-D-glucosyltransferase</fullName>
    </alternativeName>
</protein>
<proteinExistence type="inferred from homology"/>
<organism>
    <name type="scientific">Staphylococcus aureus (strain USA300 / TCH1516)</name>
    <dbReference type="NCBI Taxonomy" id="451516"/>
    <lineage>
        <taxon>Bacteria</taxon>
        <taxon>Bacillati</taxon>
        <taxon>Bacillota</taxon>
        <taxon>Bacilli</taxon>
        <taxon>Bacillales</taxon>
        <taxon>Staphylococcaceae</taxon>
        <taxon>Staphylococcus</taxon>
    </lineage>
</organism>
<dbReference type="EC" id="2.4.1.315"/>
<dbReference type="EMBL" id="CP000730">
    <property type="protein sequence ID" value="ABX28995.1"/>
    <property type="molecule type" value="Genomic_DNA"/>
</dbReference>
<dbReference type="RefSeq" id="WP_000258650.1">
    <property type="nucleotide sequence ID" value="NC_010079.1"/>
</dbReference>
<dbReference type="SMR" id="A8Z0C1"/>
<dbReference type="CAZy" id="GT28">
    <property type="family name" value="Glycosyltransferase Family 28"/>
</dbReference>
<dbReference type="KEGG" id="sax:USA300HOU_0975"/>
<dbReference type="HOGENOM" id="CLU_028367_0_1_9"/>
<dbReference type="UniPathway" id="UPA00894"/>
<dbReference type="GO" id="GO:0005886">
    <property type="term" value="C:plasma membrane"/>
    <property type="evidence" value="ECO:0007669"/>
    <property type="project" value="UniProtKB-SubCell"/>
</dbReference>
<dbReference type="GO" id="GO:0047228">
    <property type="term" value="F:1,2-diacylglycerol 3-glucosyltransferase activity"/>
    <property type="evidence" value="ECO:0007669"/>
    <property type="project" value="UniProtKB-UniRule"/>
</dbReference>
<dbReference type="GO" id="GO:0009246">
    <property type="term" value="P:enterobacterial common antigen biosynthetic process"/>
    <property type="evidence" value="ECO:0007669"/>
    <property type="project" value="UniProtKB-UniPathway"/>
</dbReference>
<dbReference type="GO" id="GO:0009247">
    <property type="term" value="P:glycolipid biosynthetic process"/>
    <property type="evidence" value="ECO:0007669"/>
    <property type="project" value="UniProtKB-UniRule"/>
</dbReference>
<dbReference type="GO" id="GO:0070395">
    <property type="term" value="P:lipoteichoic acid biosynthetic process"/>
    <property type="evidence" value="ECO:0007669"/>
    <property type="project" value="UniProtKB-UniRule"/>
</dbReference>
<dbReference type="CDD" id="cd17507">
    <property type="entry name" value="GT28_Beta-DGS-like"/>
    <property type="match status" value="1"/>
</dbReference>
<dbReference type="Gene3D" id="3.40.50.2000">
    <property type="entry name" value="Glycogen Phosphorylase B"/>
    <property type="match status" value="2"/>
</dbReference>
<dbReference type="HAMAP" id="MF_01280">
    <property type="entry name" value="Diacylglyc_glucosyltr"/>
    <property type="match status" value="1"/>
</dbReference>
<dbReference type="InterPro" id="IPR009695">
    <property type="entry name" value="Diacylglyc_glucosyltr_N"/>
</dbReference>
<dbReference type="InterPro" id="IPR007235">
    <property type="entry name" value="Glyco_trans_28_C"/>
</dbReference>
<dbReference type="InterPro" id="IPR050519">
    <property type="entry name" value="Glycosyltransf_28_UgtP"/>
</dbReference>
<dbReference type="InterPro" id="IPR023589">
    <property type="entry name" value="Pro_diacylglycrl_glcsylTrfase"/>
</dbReference>
<dbReference type="NCBIfam" id="NF010134">
    <property type="entry name" value="PRK13608.1"/>
    <property type="match status" value="1"/>
</dbReference>
<dbReference type="PANTHER" id="PTHR43025">
    <property type="entry name" value="MONOGALACTOSYLDIACYLGLYCEROL SYNTHASE"/>
    <property type="match status" value="1"/>
</dbReference>
<dbReference type="PANTHER" id="PTHR43025:SF3">
    <property type="entry name" value="MONOGALACTOSYLDIACYLGLYCEROL SYNTHASE 1, CHLOROPLASTIC"/>
    <property type="match status" value="1"/>
</dbReference>
<dbReference type="Pfam" id="PF04101">
    <property type="entry name" value="Glyco_tran_28_C"/>
    <property type="match status" value="1"/>
</dbReference>
<dbReference type="Pfam" id="PF06925">
    <property type="entry name" value="MGDG_synth"/>
    <property type="match status" value="1"/>
</dbReference>
<dbReference type="SUPFAM" id="SSF53756">
    <property type="entry name" value="UDP-Glycosyltransferase/glycogen phosphorylase"/>
    <property type="match status" value="1"/>
</dbReference>
<evidence type="ECO:0000255" key="1">
    <source>
        <dbReference type="HAMAP-Rule" id="MF_01280"/>
    </source>
</evidence>
<feature type="chain" id="PRO_1000085893" description="Processive diacylglycerol beta-glucosyltransferase">
    <location>
        <begin position="1"/>
        <end position="391"/>
    </location>
</feature>
<name>UGTP_STAAT</name>
<reference key="1">
    <citation type="journal article" date="2007" name="BMC Microbiol.">
        <title>Subtle genetic changes enhance virulence of methicillin resistant and sensitive Staphylococcus aureus.</title>
        <authorList>
            <person name="Highlander S.K."/>
            <person name="Hulten K.G."/>
            <person name="Qin X."/>
            <person name="Jiang H."/>
            <person name="Yerrapragada S."/>
            <person name="Mason E.O. Jr."/>
            <person name="Shang Y."/>
            <person name="Williams T.M."/>
            <person name="Fortunov R.M."/>
            <person name="Liu Y."/>
            <person name="Igboeli O."/>
            <person name="Petrosino J."/>
            <person name="Tirumalai M."/>
            <person name="Uzman A."/>
            <person name="Fox G.E."/>
            <person name="Cardenas A.M."/>
            <person name="Muzny D.M."/>
            <person name="Hemphill L."/>
            <person name="Ding Y."/>
            <person name="Dugan S."/>
            <person name="Blyth P.R."/>
            <person name="Buhay C.J."/>
            <person name="Dinh H.H."/>
            <person name="Hawes A.C."/>
            <person name="Holder M."/>
            <person name="Kovar C.L."/>
            <person name="Lee S.L."/>
            <person name="Liu W."/>
            <person name="Nazareth L.V."/>
            <person name="Wang Q."/>
            <person name="Zhou J."/>
            <person name="Kaplan S.L."/>
            <person name="Weinstock G.M."/>
        </authorList>
    </citation>
    <scope>NUCLEOTIDE SEQUENCE [LARGE SCALE GENOMIC DNA]</scope>
    <source>
        <strain>USA300 / TCH1516</strain>
    </source>
</reference>
<gene>
    <name evidence="1" type="primary">ugtP</name>
    <name type="ordered locus">USA300HOU_0975</name>
</gene>
<accession>A8Z0C1</accession>
<keyword id="KW-0119">Carbohydrate metabolism</keyword>
<keyword id="KW-1003">Cell membrane</keyword>
<keyword id="KW-0328">Glycosyltransferase</keyword>
<keyword id="KW-0444">Lipid biosynthesis</keyword>
<keyword id="KW-0443">Lipid metabolism</keyword>
<keyword id="KW-0472">Membrane</keyword>
<keyword id="KW-0808">Transferase</keyword>